<organism>
    <name type="scientific">Polaromonas naphthalenivorans (strain CJ2)</name>
    <dbReference type="NCBI Taxonomy" id="365044"/>
    <lineage>
        <taxon>Bacteria</taxon>
        <taxon>Pseudomonadati</taxon>
        <taxon>Pseudomonadota</taxon>
        <taxon>Betaproteobacteria</taxon>
        <taxon>Burkholderiales</taxon>
        <taxon>Comamonadaceae</taxon>
        <taxon>Polaromonas</taxon>
    </lineage>
</organism>
<gene>
    <name evidence="1" type="primary">rpsD</name>
    <name type="ordered locus">Pnap_0344</name>
</gene>
<name>RS4_POLNA</name>
<reference key="1">
    <citation type="journal article" date="2009" name="Environ. Microbiol.">
        <title>The genome of Polaromonas naphthalenivorans strain CJ2, isolated from coal tar-contaminated sediment, reveals physiological and metabolic versatility and evolution through extensive horizontal gene transfer.</title>
        <authorList>
            <person name="Yagi J.M."/>
            <person name="Sims D."/>
            <person name="Brettin T."/>
            <person name="Bruce D."/>
            <person name="Madsen E.L."/>
        </authorList>
    </citation>
    <scope>NUCLEOTIDE SEQUENCE [LARGE SCALE GENOMIC DNA]</scope>
    <source>
        <strain>CJ2</strain>
    </source>
</reference>
<keyword id="KW-1185">Reference proteome</keyword>
<keyword id="KW-0687">Ribonucleoprotein</keyword>
<keyword id="KW-0689">Ribosomal protein</keyword>
<keyword id="KW-0694">RNA-binding</keyword>
<keyword id="KW-0699">rRNA-binding</keyword>
<sequence length="207" mass="23347">MARYLGPKAKLSRREGTDLFLKSARRSISDKAKFDSKPGQHGRTSGTRTSDYGLQLREKQKVKRMYGVLEKQFRRYFEEADRRRGNTGANLLSVLESRLDNVVYRMGFGSTRAEARQLVSHKAMTVNGQSVNIPSYMVKAGDVIAVRDKSKKQTRIAEALELAKQVGLPAWVDVNADKGEGTFKKVPDRDEFAADINESLIVELYSR</sequence>
<proteinExistence type="inferred from homology"/>
<protein>
    <recommendedName>
        <fullName evidence="1">Small ribosomal subunit protein uS4</fullName>
    </recommendedName>
    <alternativeName>
        <fullName evidence="3">30S ribosomal protein S4</fullName>
    </alternativeName>
</protein>
<accession>A1VJ39</accession>
<comment type="function">
    <text evidence="1">One of the primary rRNA binding proteins, it binds directly to 16S rRNA where it nucleates assembly of the body of the 30S subunit.</text>
</comment>
<comment type="function">
    <text evidence="1">With S5 and S12 plays an important role in translational accuracy.</text>
</comment>
<comment type="subunit">
    <text evidence="1">Part of the 30S ribosomal subunit. Contacts protein S5. The interaction surface between S4 and S5 is involved in control of translational fidelity.</text>
</comment>
<comment type="similarity">
    <text evidence="1">Belongs to the universal ribosomal protein uS4 family.</text>
</comment>
<evidence type="ECO:0000255" key="1">
    <source>
        <dbReference type="HAMAP-Rule" id="MF_01306"/>
    </source>
</evidence>
<evidence type="ECO:0000256" key="2">
    <source>
        <dbReference type="SAM" id="MobiDB-lite"/>
    </source>
</evidence>
<evidence type="ECO:0000305" key="3"/>
<dbReference type="EMBL" id="CP000529">
    <property type="protein sequence ID" value="ABM35667.1"/>
    <property type="molecule type" value="Genomic_DNA"/>
</dbReference>
<dbReference type="RefSeq" id="WP_011799772.1">
    <property type="nucleotide sequence ID" value="NC_008781.1"/>
</dbReference>
<dbReference type="SMR" id="A1VJ39"/>
<dbReference type="STRING" id="365044.Pnap_0344"/>
<dbReference type="KEGG" id="pna:Pnap_0344"/>
<dbReference type="eggNOG" id="COG0522">
    <property type="taxonomic scope" value="Bacteria"/>
</dbReference>
<dbReference type="HOGENOM" id="CLU_092403_0_2_4"/>
<dbReference type="OrthoDB" id="9803672at2"/>
<dbReference type="Proteomes" id="UP000000644">
    <property type="component" value="Chromosome"/>
</dbReference>
<dbReference type="GO" id="GO:0015935">
    <property type="term" value="C:small ribosomal subunit"/>
    <property type="evidence" value="ECO:0007669"/>
    <property type="project" value="InterPro"/>
</dbReference>
<dbReference type="GO" id="GO:0019843">
    <property type="term" value="F:rRNA binding"/>
    <property type="evidence" value="ECO:0007669"/>
    <property type="project" value="UniProtKB-UniRule"/>
</dbReference>
<dbReference type="GO" id="GO:0003735">
    <property type="term" value="F:structural constituent of ribosome"/>
    <property type="evidence" value="ECO:0007669"/>
    <property type="project" value="InterPro"/>
</dbReference>
<dbReference type="GO" id="GO:0042274">
    <property type="term" value="P:ribosomal small subunit biogenesis"/>
    <property type="evidence" value="ECO:0007669"/>
    <property type="project" value="TreeGrafter"/>
</dbReference>
<dbReference type="GO" id="GO:0006412">
    <property type="term" value="P:translation"/>
    <property type="evidence" value="ECO:0007669"/>
    <property type="project" value="UniProtKB-UniRule"/>
</dbReference>
<dbReference type="CDD" id="cd00165">
    <property type="entry name" value="S4"/>
    <property type="match status" value="1"/>
</dbReference>
<dbReference type="FunFam" id="1.10.1050.10:FF:000001">
    <property type="entry name" value="30S ribosomal protein S4"/>
    <property type="match status" value="1"/>
</dbReference>
<dbReference type="FunFam" id="3.10.290.10:FF:000001">
    <property type="entry name" value="30S ribosomal protein S4"/>
    <property type="match status" value="1"/>
</dbReference>
<dbReference type="Gene3D" id="1.10.1050.10">
    <property type="entry name" value="Ribosomal Protein S4 Delta 41, Chain A, domain 1"/>
    <property type="match status" value="1"/>
</dbReference>
<dbReference type="Gene3D" id="3.10.290.10">
    <property type="entry name" value="RNA-binding S4 domain"/>
    <property type="match status" value="1"/>
</dbReference>
<dbReference type="HAMAP" id="MF_01306_B">
    <property type="entry name" value="Ribosomal_uS4_B"/>
    <property type="match status" value="1"/>
</dbReference>
<dbReference type="InterPro" id="IPR022801">
    <property type="entry name" value="Ribosomal_uS4"/>
</dbReference>
<dbReference type="InterPro" id="IPR005709">
    <property type="entry name" value="Ribosomal_uS4_bac-type"/>
</dbReference>
<dbReference type="InterPro" id="IPR018079">
    <property type="entry name" value="Ribosomal_uS4_CS"/>
</dbReference>
<dbReference type="InterPro" id="IPR001912">
    <property type="entry name" value="Ribosomal_uS4_N"/>
</dbReference>
<dbReference type="InterPro" id="IPR002942">
    <property type="entry name" value="S4_RNA-bd"/>
</dbReference>
<dbReference type="InterPro" id="IPR036986">
    <property type="entry name" value="S4_RNA-bd_sf"/>
</dbReference>
<dbReference type="NCBIfam" id="NF003717">
    <property type="entry name" value="PRK05327.1"/>
    <property type="match status" value="1"/>
</dbReference>
<dbReference type="NCBIfam" id="TIGR01017">
    <property type="entry name" value="rpsD_bact"/>
    <property type="match status" value="1"/>
</dbReference>
<dbReference type="PANTHER" id="PTHR11831">
    <property type="entry name" value="30S 40S RIBOSOMAL PROTEIN"/>
    <property type="match status" value="1"/>
</dbReference>
<dbReference type="PANTHER" id="PTHR11831:SF4">
    <property type="entry name" value="SMALL RIBOSOMAL SUBUNIT PROTEIN US4M"/>
    <property type="match status" value="1"/>
</dbReference>
<dbReference type="Pfam" id="PF00163">
    <property type="entry name" value="Ribosomal_S4"/>
    <property type="match status" value="1"/>
</dbReference>
<dbReference type="Pfam" id="PF01479">
    <property type="entry name" value="S4"/>
    <property type="match status" value="1"/>
</dbReference>
<dbReference type="SMART" id="SM01390">
    <property type="entry name" value="Ribosomal_S4"/>
    <property type="match status" value="1"/>
</dbReference>
<dbReference type="SMART" id="SM00363">
    <property type="entry name" value="S4"/>
    <property type="match status" value="1"/>
</dbReference>
<dbReference type="SUPFAM" id="SSF55174">
    <property type="entry name" value="Alpha-L RNA-binding motif"/>
    <property type="match status" value="1"/>
</dbReference>
<dbReference type="PROSITE" id="PS00632">
    <property type="entry name" value="RIBOSOMAL_S4"/>
    <property type="match status" value="1"/>
</dbReference>
<dbReference type="PROSITE" id="PS50889">
    <property type="entry name" value="S4"/>
    <property type="match status" value="1"/>
</dbReference>
<feature type="chain" id="PRO_0000293333" description="Small ribosomal subunit protein uS4">
    <location>
        <begin position="1"/>
        <end position="207"/>
    </location>
</feature>
<feature type="domain" description="S4 RNA-binding" evidence="1">
    <location>
        <begin position="97"/>
        <end position="160"/>
    </location>
</feature>
<feature type="region of interest" description="Disordered" evidence="2">
    <location>
        <begin position="29"/>
        <end position="54"/>
    </location>
</feature>
<feature type="compositionally biased region" description="Basic and acidic residues" evidence="2">
    <location>
        <begin position="29"/>
        <end position="38"/>
    </location>
</feature>
<feature type="compositionally biased region" description="Polar residues" evidence="2">
    <location>
        <begin position="42"/>
        <end position="52"/>
    </location>
</feature>